<sequence length="421" mass="46753">MFSLHFIDEAFNEVYAGNGGHGIVAFRREKYVPFGGPAGGNGGNGGSVIFVGEQGETTLLKLKYQKHLKASHGFNGKNKSQNGANAPHLYVKVPLGTVFFTMDNHFLGEILHHQETLVIAKGGKGGRGNKALANFKNPAPSYAEKGDLGEHFKIKIQLKVLADVGLLGFPSVGKSSLISLISKAQPKIDSYPFTTLFPHLGVVLIDGFSFVIADLPGLIPNAHLGQGLGIQFLKHIERCRVLVHLISMQSLDPYKDYVALNKELQQYNSTLVEKKQIIVANKMDLPDAEKKLKDLQKKLSDVTIIPLSLINFYNIEKLKYAIKNLLQKTPFVIPKHDNFKVYDLNSETQTFTINKNKEGVFVVSGRQVEIFSHRTDFNNEAAVKRFNYLLKKIGIEEALKQKGAKLGDQVKICNYLFDFVI</sequence>
<proteinExistence type="inferred from homology"/>
<reference key="1">
    <citation type="journal article" date="2008" name="J. Bacteriol.">
        <title>Comparative genome analysis of 'Candidatus Phytoplasma australiense' (subgroup tuf-Australia I; rp-A) and 'Ca. Phytoplasma asteris' strains OY-M and AY-WB.</title>
        <authorList>
            <person name="Tran-Nguyen L.T."/>
            <person name="Kube M."/>
            <person name="Schneider B."/>
            <person name="Reinhardt R."/>
            <person name="Gibb K.S."/>
        </authorList>
    </citation>
    <scope>NUCLEOTIDE SEQUENCE [LARGE SCALE GENOMIC DNA]</scope>
</reference>
<protein>
    <recommendedName>
        <fullName evidence="1">GTPase Obg</fullName>
        <ecNumber evidence="1">3.6.5.-</ecNumber>
    </recommendedName>
    <alternativeName>
        <fullName evidence="1">GTP-binding protein Obg</fullName>
    </alternativeName>
</protein>
<feature type="chain" id="PRO_0000386123" description="GTPase Obg">
    <location>
        <begin position="1"/>
        <end position="421"/>
    </location>
</feature>
<feature type="domain" description="Obg" evidence="3">
    <location>
        <begin position="4"/>
        <end position="161"/>
    </location>
</feature>
<feature type="domain" description="OBG-type G" evidence="1">
    <location>
        <begin position="162"/>
        <end position="327"/>
    </location>
</feature>
<feature type="domain" description="OCT" evidence="2">
    <location>
        <begin position="343"/>
        <end position="421"/>
    </location>
</feature>
<feature type="binding site" evidence="1">
    <location>
        <begin position="168"/>
        <end position="175"/>
    </location>
    <ligand>
        <name>GTP</name>
        <dbReference type="ChEBI" id="CHEBI:37565"/>
    </ligand>
</feature>
<feature type="binding site" evidence="1">
    <location>
        <position position="175"/>
    </location>
    <ligand>
        <name>Mg(2+)</name>
        <dbReference type="ChEBI" id="CHEBI:18420"/>
    </ligand>
</feature>
<feature type="binding site" evidence="1">
    <location>
        <begin position="193"/>
        <end position="197"/>
    </location>
    <ligand>
        <name>GTP</name>
        <dbReference type="ChEBI" id="CHEBI:37565"/>
    </ligand>
</feature>
<feature type="binding site" evidence="1">
    <location>
        <position position="195"/>
    </location>
    <ligand>
        <name>Mg(2+)</name>
        <dbReference type="ChEBI" id="CHEBI:18420"/>
    </ligand>
</feature>
<feature type="binding site" evidence="1">
    <location>
        <begin position="214"/>
        <end position="217"/>
    </location>
    <ligand>
        <name>GTP</name>
        <dbReference type="ChEBI" id="CHEBI:37565"/>
    </ligand>
</feature>
<feature type="binding site" evidence="1">
    <location>
        <begin position="281"/>
        <end position="284"/>
    </location>
    <ligand>
        <name>GTP</name>
        <dbReference type="ChEBI" id="CHEBI:37565"/>
    </ligand>
</feature>
<feature type="binding site" evidence="1">
    <location>
        <begin position="308"/>
        <end position="310"/>
    </location>
    <ligand>
        <name>GTP</name>
        <dbReference type="ChEBI" id="CHEBI:37565"/>
    </ligand>
</feature>
<keyword id="KW-0963">Cytoplasm</keyword>
<keyword id="KW-0342">GTP-binding</keyword>
<keyword id="KW-0378">Hydrolase</keyword>
<keyword id="KW-0460">Magnesium</keyword>
<keyword id="KW-0479">Metal-binding</keyword>
<keyword id="KW-0547">Nucleotide-binding</keyword>
<keyword id="KW-1185">Reference proteome</keyword>
<organism>
    <name type="scientific">Phytoplasma australiense</name>
    <dbReference type="NCBI Taxonomy" id="59748"/>
    <lineage>
        <taxon>Bacteria</taxon>
        <taxon>Bacillati</taxon>
        <taxon>Mycoplasmatota</taxon>
        <taxon>Mollicutes</taxon>
        <taxon>Acholeplasmatales</taxon>
        <taxon>Acholeplasmataceae</taxon>
        <taxon>Candidatus Phytoplasma</taxon>
        <taxon>16SrXII (Stolbur group)</taxon>
    </lineage>
</organism>
<dbReference type="EC" id="3.6.5.-" evidence="1"/>
<dbReference type="EMBL" id="AM422018">
    <property type="protein sequence ID" value="CAM11925.1"/>
    <property type="molecule type" value="Genomic_DNA"/>
</dbReference>
<dbReference type="SMR" id="B1VAF2"/>
<dbReference type="STRING" id="59748.PA0591"/>
<dbReference type="KEGG" id="pal:PA0591"/>
<dbReference type="eggNOG" id="COG0536">
    <property type="taxonomic scope" value="Bacteria"/>
</dbReference>
<dbReference type="Proteomes" id="UP000008323">
    <property type="component" value="Chromosome"/>
</dbReference>
<dbReference type="GO" id="GO:0005737">
    <property type="term" value="C:cytoplasm"/>
    <property type="evidence" value="ECO:0007669"/>
    <property type="project" value="UniProtKB-SubCell"/>
</dbReference>
<dbReference type="GO" id="GO:0005525">
    <property type="term" value="F:GTP binding"/>
    <property type="evidence" value="ECO:0007669"/>
    <property type="project" value="UniProtKB-UniRule"/>
</dbReference>
<dbReference type="GO" id="GO:0003924">
    <property type="term" value="F:GTPase activity"/>
    <property type="evidence" value="ECO:0007669"/>
    <property type="project" value="UniProtKB-UniRule"/>
</dbReference>
<dbReference type="GO" id="GO:0000287">
    <property type="term" value="F:magnesium ion binding"/>
    <property type="evidence" value="ECO:0007669"/>
    <property type="project" value="InterPro"/>
</dbReference>
<dbReference type="GO" id="GO:0042254">
    <property type="term" value="P:ribosome biogenesis"/>
    <property type="evidence" value="ECO:0007669"/>
    <property type="project" value="UniProtKB-UniRule"/>
</dbReference>
<dbReference type="CDD" id="cd01898">
    <property type="entry name" value="Obg"/>
    <property type="match status" value="1"/>
</dbReference>
<dbReference type="FunFam" id="2.70.210.12:FF:000001">
    <property type="entry name" value="GTPase Obg"/>
    <property type="match status" value="1"/>
</dbReference>
<dbReference type="Gene3D" id="3.30.300.350">
    <property type="entry name" value="GTP-binding protein OBG, C-terminal domain"/>
    <property type="match status" value="1"/>
</dbReference>
<dbReference type="Gene3D" id="2.70.210.12">
    <property type="entry name" value="GTP1/OBG domain"/>
    <property type="match status" value="1"/>
</dbReference>
<dbReference type="Gene3D" id="3.40.50.300">
    <property type="entry name" value="P-loop containing nucleotide triphosphate hydrolases"/>
    <property type="match status" value="1"/>
</dbReference>
<dbReference type="HAMAP" id="MF_01454">
    <property type="entry name" value="GTPase_Obg"/>
    <property type="match status" value="1"/>
</dbReference>
<dbReference type="InterPro" id="IPR031167">
    <property type="entry name" value="G_OBG"/>
</dbReference>
<dbReference type="InterPro" id="IPR006073">
    <property type="entry name" value="GTP-bd"/>
</dbReference>
<dbReference type="InterPro" id="IPR014100">
    <property type="entry name" value="GTP-bd_Obg/CgtA"/>
</dbReference>
<dbReference type="InterPro" id="IPR036346">
    <property type="entry name" value="GTP-bd_prot_GTP1/OBG_C_sf"/>
</dbReference>
<dbReference type="InterPro" id="IPR006074">
    <property type="entry name" value="GTP1-OBG_CS"/>
</dbReference>
<dbReference type="InterPro" id="IPR006169">
    <property type="entry name" value="GTP1_OBG_dom"/>
</dbReference>
<dbReference type="InterPro" id="IPR036726">
    <property type="entry name" value="GTP1_OBG_dom_sf"/>
</dbReference>
<dbReference type="InterPro" id="IPR045086">
    <property type="entry name" value="OBG_GTPase"/>
</dbReference>
<dbReference type="InterPro" id="IPR015349">
    <property type="entry name" value="OCT_dom"/>
</dbReference>
<dbReference type="InterPro" id="IPR027417">
    <property type="entry name" value="P-loop_NTPase"/>
</dbReference>
<dbReference type="InterPro" id="IPR005225">
    <property type="entry name" value="Small_GTP-bd"/>
</dbReference>
<dbReference type="NCBIfam" id="TIGR02729">
    <property type="entry name" value="Obg_CgtA"/>
    <property type="match status" value="1"/>
</dbReference>
<dbReference type="NCBIfam" id="TIGR03595">
    <property type="entry name" value="Obg_CgtA_exten"/>
    <property type="match status" value="1"/>
</dbReference>
<dbReference type="NCBIfam" id="NF008954">
    <property type="entry name" value="PRK12296.1"/>
    <property type="match status" value="1"/>
</dbReference>
<dbReference type="NCBIfam" id="NF008955">
    <property type="entry name" value="PRK12297.1"/>
    <property type="match status" value="1"/>
</dbReference>
<dbReference type="NCBIfam" id="NF008956">
    <property type="entry name" value="PRK12299.1"/>
    <property type="match status" value="1"/>
</dbReference>
<dbReference type="NCBIfam" id="TIGR00231">
    <property type="entry name" value="small_GTP"/>
    <property type="match status" value="1"/>
</dbReference>
<dbReference type="PANTHER" id="PTHR11702">
    <property type="entry name" value="DEVELOPMENTALLY REGULATED GTP-BINDING PROTEIN-RELATED"/>
    <property type="match status" value="1"/>
</dbReference>
<dbReference type="PANTHER" id="PTHR11702:SF31">
    <property type="entry name" value="MITOCHONDRIAL RIBOSOME-ASSOCIATED GTPASE 2"/>
    <property type="match status" value="1"/>
</dbReference>
<dbReference type="Pfam" id="PF09269">
    <property type="entry name" value="DUF1967"/>
    <property type="match status" value="1"/>
</dbReference>
<dbReference type="Pfam" id="PF01018">
    <property type="entry name" value="GTP1_OBG"/>
    <property type="match status" value="1"/>
</dbReference>
<dbReference type="Pfam" id="PF01926">
    <property type="entry name" value="MMR_HSR1"/>
    <property type="match status" value="1"/>
</dbReference>
<dbReference type="PIRSF" id="PIRSF002401">
    <property type="entry name" value="GTP_bd_Obg/CgtA"/>
    <property type="match status" value="1"/>
</dbReference>
<dbReference type="PRINTS" id="PR00326">
    <property type="entry name" value="GTP1OBG"/>
</dbReference>
<dbReference type="SUPFAM" id="SSF102741">
    <property type="entry name" value="Obg GTP-binding protein C-terminal domain"/>
    <property type="match status" value="1"/>
</dbReference>
<dbReference type="SUPFAM" id="SSF82051">
    <property type="entry name" value="Obg GTP-binding protein N-terminal domain"/>
    <property type="match status" value="1"/>
</dbReference>
<dbReference type="SUPFAM" id="SSF52540">
    <property type="entry name" value="P-loop containing nucleoside triphosphate hydrolases"/>
    <property type="match status" value="1"/>
</dbReference>
<dbReference type="PROSITE" id="PS51710">
    <property type="entry name" value="G_OBG"/>
    <property type="match status" value="1"/>
</dbReference>
<dbReference type="PROSITE" id="PS00905">
    <property type="entry name" value="GTP1_OBG"/>
    <property type="match status" value="1"/>
</dbReference>
<dbReference type="PROSITE" id="PS51883">
    <property type="entry name" value="OBG"/>
    <property type="match status" value="1"/>
</dbReference>
<dbReference type="PROSITE" id="PS51881">
    <property type="entry name" value="OCT"/>
    <property type="match status" value="1"/>
</dbReference>
<evidence type="ECO:0000255" key="1">
    <source>
        <dbReference type="HAMAP-Rule" id="MF_01454"/>
    </source>
</evidence>
<evidence type="ECO:0000255" key="2">
    <source>
        <dbReference type="PROSITE-ProRule" id="PRU01229"/>
    </source>
</evidence>
<evidence type="ECO:0000255" key="3">
    <source>
        <dbReference type="PROSITE-ProRule" id="PRU01231"/>
    </source>
</evidence>
<comment type="function">
    <text evidence="1">An essential GTPase which binds GTP, GDP and possibly (p)ppGpp with moderate affinity, with high nucleotide exchange rates and a fairly low GTP hydrolysis rate. Plays a role in control of the cell cycle, stress response, ribosome biogenesis and in those bacteria that undergo differentiation, in morphogenesis control.</text>
</comment>
<comment type="cofactor">
    <cofactor evidence="1">
        <name>Mg(2+)</name>
        <dbReference type="ChEBI" id="CHEBI:18420"/>
    </cofactor>
</comment>
<comment type="subunit">
    <text evidence="1">Monomer.</text>
</comment>
<comment type="subcellular location">
    <subcellularLocation>
        <location evidence="1">Cytoplasm</location>
    </subcellularLocation>
</comment>
<comment type="similarity">
    <text evidence="1">Belongs to the TRAFAC class OBG-HflX-like GTPase superfamily. OBG GTPase family.</text>
</comment>
<name>OBG_PHYAS</name>
<accession>B1VAF2</accession>
<gene>
    <name evidence="1" type="primary">obg</name>
    <name type="ordered locus">PA0591</name>
</gene>